<gene>
    <name type="primary">drc12</name>
    <name type="synonym">ccdc153</name>
    <name type="ORF">zgc:171582</name>
</gene>
<comment type="function">
    <text evidence="1">Component of the nexin-dynein regulatory complex (N-DRC), a key regulator of ciliary/flagellar motility which maintains the alignment and integrity of the distal axoneme and regulates microtubule sliding in motile axonemes.</text>
</comment>
<comment type="subunit">
    <text evidence="1">Component of the nexin-dynein regulatory complex (N-DRC).</text>
</comment>
<comment type="subcellular location">
    <subcellularLocation>
        <location evidence="1">Cytoplasm</location>
        <location evidence="1">Cytoskeleton</location>
        <location evidence="1">Flagellum axoneme</location>
    </subcellularLocation>
</comment>
<comment type="similarity">
    <text evidence="4">Belongs to the DRC12 family.</text>
</comment>
<evidence type="ECO:0000250" key="1">
    <source>
        <dbReference type="UniProtKB" id="Q22RH5"/>
    </source>
</evidence>
<evidence type="ECO:0000255" key="2"/>
<evidence type="ECO:0000256" key="3">
    <source>
        <dbReference type="SAM" id="MobiDB-lite"/>
    </source>
</evidence>
<evidence type="ECO:0000305" key="4"/>
<reference key="1">
    <citation type="submission" date="2007-10" db="EMBL/GenBank/DDBJ databases">
        <authorList>
            <consortium name="NIH - Zebrafish Gene Collection (ZGC) project"/>
        </authorList>
    </citation>
    <scope>NUCLEOTIDE SEQUENCE [LARGE SCALE MRNA]</scope>
    <source>
        <tissue>Olfactory epithelium</tissue>
    </source>
</reference>
<protein>
    <recommendedName>
        <fullName>Dynein regulatory complex protein 12</fullName>
    </recommendedName>
</protein>
<feature type="chain" id="PRO_0000342653" description="Dynein regulatory complex protein 12">
    <location>
        <begin position="1"/>
        <end position="202"/>
    </location>
</feature>
<feature type="region of interest" description="Disordered" evidence="3">
    <location>
        <begin position="1"/>
        <end position="29"/>
    </location>
</feature>
<feature type="coiled-coil region" evidence="2">
    <location>
        <begin position="50"/>
        <end position="161"/>
    </location>
</feature>
<feature type="compositionally biased region" description="Basic and acidic residues" evidence="3">
    <location>
        <begin position="11"/>
        <end position="29"/>
    </location>
</feature>
<sequence>MPPKKKGIGGSKKEKTKKSTPEKDDGLTEKYRRSVLDVSVLKEHLALRSGVARQATAVRDELKSQVRDLEQLLSQERSDMKDITADLNRQYKSMETDLQSKADKLEASVDLLEKQLAECQVELKSERELRENTEAEKDAIISDLQSKLDSMERECEKILHGCLDSLLSHLADTRMKWEEQSTVIHQDVKDMLREFGINPLHM</sequence>
<name>DRC12_DANRE</name>
<keyword id="KW-0966">Cell projection</keyword>
<keyword id="KW-0969">Cilium</keyword>
<keyword id="KW-0175">Coiled coil</keyword>
<keyword id="KW-0963">Cytoplasm</keyword>
<keyword id="KW-0206">Cytoskeleton</keyword>
<keyword id="KW-0282">Flagellum</keyword>
<keyword id="KW-1185">Reference proteome</keyword>
<accession>A8KB59</accession>
<proteinExistence type="evidence at transcript level"/>
<dbReference type="EMBL" id="BC153977">
    <property type="protein sequence ID" value="AAI53978.1"/>
    <property type="molecule type" value="mRNA"/>
</dbReference>
<dbReference type="RefSeq" id="NP_001104680.1">
    <property type="nucleotide sequence ID" value="NM_001111210.1"/>
</dbReference>
<dbReference type="SMR" id="A8KB59"/>
<dbReference type="FunCoup" id="A8KB59">
    <property type="interactions" value="5"/>
</dbReference>
<dbReference type="STRING" id="7955.ENSDARP00000103065"/>
<dbReference type="PaxDb" id="7955-ENSDARP00000103065"/>
<dbReference type="GeneID" id="792470"/>
<dbReference type="KEGG" id="dre:792470"/>
<dbReference type="AGR" id="ZFIN:ZDB-GENE-080204-16"/>
<dbReference type="CTD" id="283152"/>
<dbReference type="ZFIN" id="ZDB-GENE-080204-16">
    <property type="gene designation" value="drc12"/>
</dbReference>
<dbReference type="eggNOG" id="ENOG502S1BN">
    <property type="taxonomic scope" value="Eukaryota"/>
</dbReference>
<dbReference type="InParanoid" id="A8KB59"/>
<dbReference type="OrthoDB" id="10264405at2759"/>
<dbReference type="PhylomeDB" id="A8KB59"/>
<dbReference type="PRO" id="PR:A8KB59"/>
<dbReference type="Proteomes" id="UP000000437">
    <property type="component" value="Chromosome 15"/>
</dbReference>
<dbReference type="GO" id="GO:0005737">
    <property type="term" value="C:cytoplasm"/>
    <property type="evidence" value="ECO:0007669"/>
    <property type="project" value="UniProtKB-KW"/>
</dbReference>
<dbReference type="GO" id="GO:0005856">
    <property type="term" value="C:cytoskeleton"/>
    <property type="evidence" value="ECO:0007669"/>
    <property type="project" value="UniProtKB-KW"/>
</dbReference>
<dbReference type="GO" id="GO:0031514">
    <property type="term" value="C:motile cilium"/>
    <property type="evidence" value="ECO:0007669"/>
    <property type="project" value="UniProtKB-KW"/>
</dbReference>
<dbReference type="Gene3D" id="1.10.287.2610">
    <property type="match status" value="1"/>
</dbReference>
<dbReference type="InterPro" id="IPR033585">
    <property type="entry name" value="DRC12-like"/>
</dbReference>
<dbReference type="PANTHER" id="PTHR28656">
    <property type="entry name" value="COILED-COIL DOMAIN-CONTAINING PROTEIN 153"/>
    <property type="match status" value="1"/>
</dbReference>
<dbReference type="PANTHER" id="PTHR28656:SF1">
    <property type="entry name" value="COILED-COIL DOMAIN-CONTAINING PROTEIN 153"/>
    <property type="match status" value="1"/>
</dbReference>
<organism>
    <name type="scientific">Danio rerio</name>
    <name type="common">Zebrafish</name>
    <name type="synonym">Brachydanio rerio</name>
    <dbReference type="NCBI Taxonomy" id="7955"/>
    <lineage>
        <taxon>Eukaryota</taxon>
        <taxon>Metazoa</taxon>
        <taxon>Chordata</taxon>
        <taxon>Craniata</taxon>
        <taxon>Vertebrata</taxon>
        <taxon>Euteleostomi</taxon>
        <taxon>Actinopterygii</taxon>
        <taxon>Neopterygii</taxon>
        <taxon>Teleostei</taxon>
        <taxon>Ostariophysi</taxon>
        <taxon>Cypriniformes</taxon>
        <taxon>Danionidae</taxon>
        <taxon>Danioninae</taxon>
        <taxon>Danio</taxon>
    </lineage>
</organism>